<protein>
    <recommendedName>
        <fullName evidence="1">Transcriptional repressor NrdR</fullName>
    </recommendedName>
</protein>
<dbReference type="EMBL" id="CP000680">
    <property type="protein sequence ID" value="ABP86605.1"/>
    <property type="molecule type" value="Genomic_DNA"/>
</dbReference>
<dbReference type="SMR" id="A4XZ39"/>
<dbReference type="STRING" id="399739.Pmen_3858"/>
<dbReference type="KEGG" id="pmy:Pmen_3858"/>
<dbReference type="eggNOG" id="COG1327">
    <property type="taxonomic scope" value="Bacteria"/>
</dbReference>
<dbReference type="HOGENOM" id="CLU_108412_0_0_6"/>
<dbReference type="OrthoDB" id="9807461at2"/>
<dbReference type="GO" id="GO:0005524">
    <property type="term" value="F:ATP binding"/>
    <property type="evidence" value="ECO:0007669"/>
    <property type="project" value="UniProtKB-KW"/>
</dbReference>
<dbReference type="GO" id="GO:0003677">
    <property type="term" value="F:DNA binding"/>
    <property type="evidence" value="ECO:0007669"/>
    <property type="project" value="UniProtKB-KW"/>
</dbReference>
<dbReference type="GO" id="GO:0008270">
    <property type="term" value="F:zinc ion binding"/>
    <property type="evidence" value="ECO:0007669"/>
    <property type="project" value="UniProtKB-UniRule"/>
</dbReference>
<dbReference type="GO" id="GO:0045892">
    <property type="term" value="P:negative regulation of DNA-templated transcription"/>
    <property type="evidence" value="ECO:0007669"/>
    <property type="project" value="UniProtKB-UniRule"/>
</dbReference>
<dbReference type="HAMAP" id="MF_00440">
    <property type="entry name" value="NrdR"/>
    <property type="match status" value="1"/>
</dbReference>
<dbReference type="InterPro" id="IPR005144">
    <property type="entry name" value="ATP-cone_dom"/>
</dbReference>
<dbReference type="InterPro" id="IPR055173">
    <property type="entry name" value="NrdR-like_N"/>
</dbReference>
<dbReference type="InterPro" id="IPR003796">
    <property type="entry name" value="RNR_NrdR-like"/>
</dbReference>
<dbReference type="NCBIfam" id="TIGR00244">
    <property type="entry name" value="transcriptional regulator NrdR"/>
    <property type="match status" value="1"/>
</dbReference>
<dbReference type="PANTHER" id="PTHR30455">
    <property type="entry name" value="TRANSCRIPTIONAL REPRESSOR NRDR"/>
    <property type="match status" value="1"/>
</dbReference>
<dbReference type="PANTHER" id="PTHR30455:SF2">
    <property type="entry name" value="TRANSCRIPTIONAL REPRESSOR NRDR"/>
    <property type="match status" value="1"/>
</dbReference>
<dbReference type="Pfam" id="PF03477">
    <property type="entry name" value="ATP-cone"/>
    <property type="match status" value="1"/>
</dbReference>
<dbReference type="Pfam" id="PF22811">
    <property type="entry name" value="Zn_ribbon_NrdR"/>
    <property type="match status" value="1"/>
</dbReference>
<dbReference type="PROSITE" id="PS51161">
    <property type="entry name" value="ATP_CONE"/>
    <property type="match status" value="1"/>
</dbReference>
<name>NRDR_ECTM1</name>
<proteinExistence type="inferred from homology"/>
<reference key="1">
    <citation type="submission" date="2007-04" db="EMBL/GenBank/DDBJ databases">
        <title>Complete sequence of Pseudomonas mendocina ymp.</title>
        <authorList>
            <consortium name="US DOE Joint Genome Institute"/>
            <person name="Copeland A."/>
            <person name="Lucas S."/>
            <person name="Lapidus A."/>
            <person name="Barry K."/>
            <person name="Glavina del Rio T."/>
            <person name="Dalin E."/>
            <person name="Tice H."/>
            <person name="Pitluck S."/>
            <person name="Kiss H."/>
            <person name="Brettin T."/>
            <person name="Detter J.C."/>
            <person name="Bruce D."/>
            <person name="Han C."/>
            <person name="Schmutz J."/>
            <person name="Larimer F."/>
            <person name="Land M."/>
            <person name="Hauser L."/>
            <person name="Kyrpides N."/>
            <person name="Mikhailova N."/>
            <person name="Hersman L."/>
            <person name="Dubois J."/>
            <person name="Maurice P."/>
            <person name="Richardson P."/>
        </authorList>
    </citation>
    <scope>NUCLEOTIDE SEQUENCE [LARGE SCALE GENOMIC DNA]</scope>
    <source>
        <strain>ymp</strain>
    </source>
</reference>
<sequence length="155" mass="18061">MHCPFCAANDTKVIDSRLVAEGDQVRRRRECVACGERFTTFETAELVMPRLIKQDGSRQPFDEEKLRAGMQRALEKRPVSVERLEEAIARIKQQLRATGEREVKSLVLGELVMTELSKLDEVAYIRFASVYRRFQDLNEFREEIERLAREPSKSR</sequence>
<evidence type="ECO:0000255" key="1">
    <source>
        <dbReference type="HAMAP-Rule" id="MF_00440"/>
    </source>
</evidence>
<accession>A4XZ39</accession>
<comment type="function">
    <text evidence="1">Negatively regulates transcription of bacterial ribonucleotide reductase nrd genes and operons by binding to NrdR-boxes.</text>
</comment>
<comment type="cofactor">
    <cofactor evidence="1">
        <name>Zn(2+)</name>
        <dbReference type="ChEBI" id="CHEBI:29105"/>
    </cofactor>
    <text evidence="1">Binds 1 zinc ion.</text>
</comment>
<comment type="similarity">
    <text evidence="1">Belongs to the NrdR family.</text>
</comment>
<keyword id="KW-0067">ATP-binding</keyword>
<keyword id="KW-0238">DNA-binding</keyword>
<keyword id="KW-0479">Metal-binding</keyword>
<keyword id="KW-0547">Nucleotide-binding</keyword>
<keyword id="KW-0678">Repressor</keyword>
<keyword id="KW-0804">Transcription</keyword>
<keyword id="KW-0805">Transcription regulation</keyword>
<keyword id="KW-0862">Zinc</keyword>
<keyword id="KW-0863">Zinc-finger</keyword>
<feature type="chain" id="PRO_1000080803" description="Transcriptional repressor NrdR">
    <location>
        <begin position="1"/>
        <end position="155"/>
    </location>
</feature>
<feature type="domain" description="ATP-cone" evidence="1">
    <location>
        <begin position="49"/>
        <end position="139"/>
    </location>
</feature>
<feature type="zinc finger region" evidence="1">
    <location>
        <begin position="3"/>
        <end position="34"/>
    </location>
</feature>
<organism>
    <name type="scientific">Ectopseudomonas mendocina (strain ymp)</name>
    <name type="common">Pseudomonas mendocina</name>
    <dbReference type="NCBI Taxonomy" id="399739"/>
    <lineage>
        <taxon>Bacteria</taxon>
        <taxon>Pseudomonadati</taxon>
        <taxon>Pseudomonadota</taxon>
        <taxon>Gammaproteobacteria</taxon>
        <taxon>Pseudomonadales</taxon>
        <taxon>Pseudomonadaceae</taxon>
        <taxon>Ectopseudomonas</taxon>
    </lineage>
</organism>
<gene>
    <name evidence="1" type="primary">nrdR</name>
    <name type="ordered locus">Pmen_3858</name>
</gene>